<name>RNFA_YERPA</name>
<proteinExistence type="inferred from homology"/>
<protein>
    <recommendedName>
        <fullName evidence="1">Ion-translocating oxidoreductase complex subunit A</fullName>
        <ecNumber evidence="1">7.-.-.-</ecNumber>
    </recommendedName>
    <alternativeName>
        <fullName evidence="1">Rnf electron transport complex subunit A</fullName>
    </alternativeName>
</protein>
<accession>Q1C7K1</accession>
<organism>
    <name type="scientific">Yersinia pestis bv. Antiqua (strain Antiqua)</name>
    <dbReference type="NCBI Taxonomy" id="360102"/>
    <lineage>
        <taxon>Bacteria</taxon>
        <taxon>Pseudomonadati</taxon>
        <taxon>Pseudomonadota</taxon>
        <taxon>Gammaproteobacteria</taxon>
        <taxon>Enterobacterales</taxon>
        <taxon>Yersiniaceae</taxon>
        <taxon>Yersinia</taxon>
    </lineage>
</organism>
<keyword id="KW-0997">Cell inner membrane</keyword>
<keyword id="KW-1003">Cell membrane</keyword>
<keyword id="KW-0249">Electron transport</keyword>
<keyword id="KW-0472">Membrane</keyword>
<keyword id="KW-1278">Translocase</keyword>
<keyword id="KW-0812">Transmembrane</keyword>
<keyword id="KW-1133">Transmembrane helix</keyword>
<keyword id="KW-0813">Transport</keyword>
<reference key="1">
    <citation type="journal article" date="2006" name="J. Bacteriol.">
        <title>Complete genome sequence of Yersinia pestis strains Antiqua and Nepal516: evidence of gene reduction in an emerging pathogen.</title>
        <authorList>
            <person name="Chain P.S.G."/>
            <person name="Hu P."/>
            <person name="Malfatti S.A."/>
            <person name="Radnedge L."/>
            <person name="Larimer F."/>
            <person name="Vergez L.M."/>
            <person name="Worsham P."/>
            <person name="Chu M.C."/>
            <person name="Andersen G.L."/>
        </authorList>
    </citation>
    <scope>NUCLEOTIDE SEQUENCE [LARGE SCALE GENOMIC DNA]</scope>
    <source>
        <strain>Antiqua</strain>
    </source>
</reference>
<gene>
    <name evidence="1" type="primary">rnfA</name>
    <name type="ordered locus">YPA_1605</name>
</gene>
<evidence type="ECO:0000255" key="1">
    <source>
        <dbReference type="HAMAP-Rule" id="MF_00459"/>
    </source>
</evidence>
<sequence>MTEYLLLFVGTVLVNNFVLVKFLGLCPFMGVSKKLETAIGMGLATTFVLTLASVCAWMVNSFILLPLGLIYLRTLAFILVIAVVVQFTELVVRKTSPTLYRLLGIFLPLITTNCAVLGVALLNVNQSHNFMQSAVYGFSAAAGFSLVMVLFAAIRERLAVADVPAPFRGSSIALITAGLMSLAFMGFTGLVKF</sequence>
<dbReference type="EC" id="7.-.-.-" evidence="1"/>
<dbReference type="EMBL" id="CP000308">
    <property type="protein sequence ID" value="ABG13571.1"/>
    <property type="molecule type" value="Genomic_DNA"/>
</dbReference>
<dbReference type="SMR" id="Q1C7K1"/>
<dbReference type="KEGG" id="ypa:YPA_1605"/>
<dbReference type="Proteomes" id="UP000001971">
    <property type="component" value="Chromosome"/>
</dbReference>
<dbReference type="GO" id="GO:0005886">
    <property type="term" value="C:plasma membrane"/>
    <property type="evidence" value="ECO:0007669"/>
    <property type="project" value="UniProtKB-SubCell"/>
</dbReference>
<dbReference type="GO" id="GO:0022900">
    <property type="term" value="P:electron transport chain"/>
    <property type="evidence" value="ECO:0007669"/>
    <property type="project" value="UniProtKB-UniRule"/>
</dbReference>
<dbReference type="HAMAP" id="MF_00459">
    <property type="entry name" value="RsxA_RnfA"/>
    <property type="match status" value="1"/>
</dbReference>
<dbReference type="InterPro" id="IPR011293">
    <property type="entry name" value="Ion_transpt_RnfA/RsxA"/>
</dbReference>
<dbReference type="InterPro" id="IPR003667">
    <property type="entry name" value="NqrDE/RnfAE"/>
</dbReference>
<dbReference type="InterPro" id="IPR050133">
    <property type="entry name" value="NqrDE/RnfAE_oxidrdctase"/>
</dbReference>
<dbReference type="NCBIfam" id="NF003481">
    <property type="entry name" value="PRK05151.1"/>
    <property type="match status" value="1"/>
</dbReference>
<dbReference type="NCBIfam" id="TIGR01943">
    <property type="entry name" value="rnfA"/>
    <property type="match status" value="1"/>
</dbReference>
<dbReference type="PANTHER" id="PTHR30335">
    <property type="entry name" value="INTEGRAL MEMBRANE PROTEIN OF SOXR-REDUCING COMPLEX"/>
    <property type="match status" value="1"/>
</dbReference>
<dbReference type="PANTHER" id="PTHR30335:SF0">
    <property type="entry name" value="ION-TRANSLOCATING OXIDOREDUCTASE COMPLEX SUBUNIT A"/>
    <property type="match status" value="1"/>
</dbReference>
<dbReference type="Pfam" id="PF02508">
    <property type="entry name" value="Rnf-Nqr"/>
    <property type="match status" value="1"/>
</dbReference>
<dbReference type="PIRSF" id="PIRSF006102">
    <property type="entry name" value="NQR_DE"/>
    <property type="match status" value="1"/>
</dbReference>
<comment type="function">
    <text evidence="1">Part of a membrane-bound complex that couples electron transfer with translocation of ions across the membrane.</text>
</comment>
<comment type="subunit">
    <text evidence="1">The complex is composed of six subunits: RnfA, RnfB, RnfC, RnfD, RnfE and RnfG.</text>
</comment>
<comment type="subcellular location">
    <subcellularLocation>
        <location evidence="1">Cell inner membrane</location>
        <topology evidence="1">Multi-pass membrane protein</topology>
    </subcellularLocation>
</comment>
<comment type="similarity">
    <text evidence="1">Belongs to the NqrDE/RnfAE family.</text>
</comment>
<feature type="chain" id="PRO_1000013565" description="Ion-translocating oxidoreductase complex subunit A">
    <location>
        <begin position="1"/>
        <end position="193"/>
    </location>
</feature>
<feature type="transmembrane region" description="Helical" evidence="1">
    <location>
        <begin position="5"/>
        <end position="25"/>
    </location>
</feature>
<feature type="transmembrane region" description="Helical" evidence="1">
    <location>
        <begin position="39"/>
        <end position="59"/>
    </location>
</feature>
<feature type="transmembrane region" description="Helical" evidence="1">
    <location>
        <begin position="62"/>
        <end position="82"/>
    </location>
</feature>
<feature type="transmembrane region" description="Helical" evidence="1">
    <location>
        <begin position="102"/>
        <end position="122"/>
    </location>
</feature>
<feature type="transmembrane region" description="Helical" evidence="1">
    <location>
        <begin position="134"/>
        <end position="154"/>
    </location>
</feature>
<feature type="transmembrane region" description="Helical" evidence="1">
    <location>
        <begin position="171"/>
        <end position="191"/>
    </location>
</feature>